<sequence length="196" mass="22377">MQNFTVHQGVVATLDRANVDTDQIIPKQFLKRIERTGFGQFLFFDWRFLEDGETENPDFELNRINVKGASILLTRQNFGSGSSREHAVWALDDYGFRAVIAPSFADIFFNNCFKNGVLPIALSEEDVEELFQRAEKGNPYQLTVDLENQVITDGQGFERSFEVDASRRHNMLHGLDDIAQTLLHEDKITAFEEARG</sequence>
<proteinExistence type="inferred from homology"/>
<comment type="function">
    <text evidence="1">Catalyzes the isomerization between 2-isopropylmalate and 3-isopropylmalate, via the formation of 2-isopropylmaleate.</text>
</comment>
<comment type="catalytic activity">
    <reaction evidence="1">
        <text>(2R,3S)-3-isopropylmalate = (2S)-2-isopropylmalate</text>
        <dbReference type="Rhea" id="RHEA:32287"/>
        <dbReference type="ChEBI" id="CHEBI:1178"/>
        <dbReference type="ChEBI" id="CHEBI:35121"/>
        <dbReference type="EC" id="4.2.1.33"/>
    </reaction>
</comment>
<comment type="pathway">
    <text evidence="1">Amino-acid biosynthesis; L-leucine biosynthesis; L-leucine from 3-methyl-2-oxobutanoate: step 2/4.</text>
</comment>
<comment type="subunit">
    <text evidence="1">Heterodimer of LeuC and LeuD.</text>
</comment>
<comment type="similarity">
    <text evidence="1">Belongs to the LeuD family. LeuD type 1 subfamily.</text>
</comment>
<evidence type="ECO:0000255" key="1">
    <source>
        <dbReference type="HAMAP-Rule" id="MF_01031"/>
    </source>
</evidence>
<protein>
    <recommendedName>
        <fullName evidence="1">3-isopropylmalate dehydratase small subunit</fullName>
        <ecNumber evidence="1">4.2.1.33</ecNumber>
    </recommendedName>
    <alternativeName>
        <fullName evidence="1">Alpha-IPM isomerase</fullName>
        <shortName evidence="1">IPMI</shortName>
    </alternativeName>
    <alternativeName>
        <fullName evidence="1">Isopropylmalate isomerase</fullName>
    </alternativeName>
</protein>
<dbReference type="EC" id="4.2.1.33" evidence="1"/>
<dbReference type="EMBL" id="BX294155">
    <property type="protein sequence ID" value="CAD77708.1"/>
    <property type="molecule type" value="Genomic_DNA"/>
</dbReference>
<dbReference type="RefSeq" id="NP_870631.1">
    <property type="nucleotide sequence ID" value="NC_005027.1"/>
</dbReference>
<dbReference type="RefSeq" id="WP_007330456.1">
    <property type="nucleotide sequence ID" value="NC_005027.1"/>
</dbReference>
<dbReference type="SMR" id="Q7UIA6"/>
<dbReference type="FunCoup" id="Q7UIA6">
    <property type="interactions" value="477"/>
</dbReference>
<dbReference type="STRING" id="243090.RB12658"/>
<dbReference type="EnsemblBacteria" id="CAD77708">
    <property type="protein sequence ID" value="CAD77708"/>
    <property type="gene ID" value="RB12658"/>
</dbReference>
<dbReference type="KEGG" id="rba:RB12658"/>
<dbReference type="PATRIC" id="fig|243090.15.peg.6139"/>
<dbReference type="eggNOG" id="COG0066">
    <property type="taxonomic scope" value="Bacteria"/>
</dbReference>
<dbReference type="HOGENOM" id="CLU_081378_0_3_0"/>
<dbReference type="InParanoid" id="Q7UIA6"/>
<dbReference type="OrthoDB" id="9777465at2"/>
<dbReference type="UniPathway" id="UPA00048">
    <property type="reaction ID" value="UER00071"/>
</dbReference>
<dbReference type="Proteomes" id="UP000001025">
    <property type="component" value="Chromosome"/>
</dbReference>
<dbReference type="GO" id="GO:0009316">
    <property type="term" value="C:3-isopropylmalate dehydratase complex"/>
    <property type="evidence" value="ECO:0007669"/>
    <property type="project" value="InterPro"/>
</dbReference>
<dbReference type="GO" id="GO:0003861">
    <property type="term" value="F:3-isopropylmalate dehydratase activity"/>
    <property type="evidence" value="ECO:0007669"/>
    <property type="project" value="UniProtKB-UniRule"/>
</dbReference>
<dbReference type="GO" id="GO:0009098">
    <property type="term" value="P:L-leucine biosynthetic process"/>
    <property type="evidence" value="ECO:0007669"/>
    <property type="project" value="UniProtKB-UniRule"/>
</dbReference>
<dbReference type="CDD" id="cd01577">
    <property type="entry name" value="IPMI_Swivel"/>
    <property type="match status" value="1"/>
</dbReference>
<dbReference type="FunFam" id="3.20.19.10:FF:000003">
    <property type="entry name" value="3-isopropylmalate dehydratase small subunit"/>
    <property type="match status" value="1"/>
</dbReference>
<dbReference type="Gene3D" id="3.20.19.10">
    <property type="entry name" value="Aconitase, domain 4"/>
    <property type="match status" value="1"/>
</dbReference>
<dbReference type="HAMAP" id="MF_01031">
    <property type="entry name" value="LeuD_type1"/>
    <property type="match status" value="1"/>
</dbReference>
<dbReference type="InterPro" id="IPR004431">
    <property type="entry name" value="3-IsopropMal_deHydase_ssu"/>
</dbReference>
<dbReference type="InterPro" id="IPR015928">
    <property type="entry name" value="Aconitase/3IPM_dehydase_swvl"/>
</dbReference>
<dbReference type="InterPro" id="IPR000573">
    <property type="entry name" value="AconitaseA/IPMdHydase_ssu_swvl"/>
</dbReference>
<dbReference type="InterPro" id="IPR033940">
    <property type="entry name" value="IPMI_Swivel"/>
</dbReference>
<dbReference type="InterPro" id="IPR050075">
    <property type="entry name" value="LeuD"/>
</dbReference>
<dbReference type="NCBIfam" id="TIGR00171">
    <property type="entry name" value="leuD"/>
    <property type="match status" value="1"/>
</dbReference>
<dbReference type="NCBIfam" id="NF002458">
    <property type="entry name" value="PRK01641.1"/>
    <property type="match status" value="1"/>
</dbReference>
<dbReference type="PANTHER" id="PTHR43345:SF5">
    <property type="entry name" value="3-ISOPROPYLMALATE DEHYDRATASE SMALL SUBUNIT"/>
    <property type="match status" value="1"/>
</dbReference>
<dbReference type="PANTHER" id="PTHR43345">
    <property type="entry name" value="3-ISOPROPYLMALATE DEHYDRATASE SMALL SUBUNIT 2-RELATED-RELATED"/>
    <property type="match status" value="1"/>
</dbReference>
<dbReference type="Pfam" id="PF00694">
    <property type="entry name" value="Aconitase_C"/>
    <property type="match status" value="1"/>
</dbReference>
<dbReference type="SUPFAM" id="SSF52016">
    <property type="entry name" value="LeuD/IlvD-like"/>
    <property type="match status" value="1"/>
</dbReference>
<accession>Q7UIA6</accession>
<name>LEUD_RHOBA</name>
<keyword id="KW-0028">Amino-acid biosynthesis</keyword>
<keyword id="KW-0100">Branched-chain amino acid biosynthesis</keyword>
<keyword id="KW-0432">Leucine biosynthesis</keyword>
<keyword id="KW-0456">Lyase</keyword>
<keyword id="KW-1185">Reference proteome</keyword>
<reference key="1">
    <citation type="journal article" date="2003" name="Proc. Natl. Acad. Sci. U.S.A.">
        <title>Complete genome sequence of the marine planctomycete Pirellula sp. strain 1.</title>
        <authorList>
            <person name="Gloeckner F.O."/>
            <person name="Kube M."/>
            <person name="Bauer M."/>
            <person name="Teeling H."/>
            <person name="Lombardot T."/>
            <person name="Ludwig W."/>
            <person name="Gade D."/>
            <person name="Beck A."/>
            <person name="Borzym K."/>
            <person name="Heitmann K."/>
            <person name="Rabus R."/>
            <person name="Schlesner H."/>
            <person name="Amann R."/>
            <person name="Reinhardt R."/>
        </authorList>
    </citation>
    <scope>NUCLEOTIDE SEQUENCE [LARGE SCALE GENOMIC DNA]</scope>
    <source>
        <strain>DSM 10527 / NCIMB 13988 / SH1</strain>
    </source>
</reference>
<organism>
    <name type="scientific">Rhodopirellula baltica (strain DSM 10527 / NCIMB 13988 / SH1)</name>
    <dbReference type="NCBI Taxonomy" id="243090"/>
    <lineage>
        <taxon>Bacteria</taxon>
        <taxon>Pseudomonadati</taxon>
        <taxon>Planctomycetota</taxon>
        <taxon>Planctomycetia</taxon>
        <taxon>Pirellulales</taxon>
        <taxon>Pirellulaceae</taxon>
        <taxon>Rhodopirellula</taxon>
    </lineage>
</organism>
<feature type="chain" id="PRO_0000141869" description="3-isopropylmalate dehydratase small subunit">
    <location>
        <begin position="1"/>
        <end position="196"/>
    </location>
</feature>
<gene>
    <name evidence="1" type="primary">leuD</name>
    <name type="ordered locus">RB12658</name>
</gene>